<keyword id="KW-0025">Alternative splicing</keyword>
<keyword id="KW-0963">Cytoplasm</keyword>
<keyword id="KW-0597">Phosphoprotein</keyword>
<keyword id="KW-1267">Proteomics identification</keyword>
<keyword id="KW-1185">Reference proteome</keyword>
<reference key="1">
    <citation type="journal article" date="2001" name="Genome Res.">
        <title>Towards a catalog of human genes and proteins: sequencing and analysis of 500 novel complete protein coding human cDNAs.</title>
        <authorList>
            <person name="Wiemann S."/>
            <person name="Weil B."/>
            <person name="Wellenreuther R."/>
            <person name="Gassenhuber J."/>
            <person name="Glassl S."/>
            <person name="Ansorge W."/>
            <person name="Boecher M."/>
            <person name="Bloecker H."/>
            <person name="Bauersachs S."/>
            <person name="Blum H."/>
            <person name="Lauber J."/>
            <person name="Duesterhoeft A."/>
            <person name="Beyer A."/>
            <person name="Koehrer K."/>
            <person name="Strack N."/>
            <person name="Mewes H.-W."/>
            <person name="Ottenwaelder B."/>
            <person name="Obermaier B."/>
            <person name="Tampe J."/>
            <person name="Heubner D."/>
            <person name="Wambutt R."/>
            <person name="Korn B."/>
            <person name="Klein M."/>
            <person name="Poustka A."/>
        </authorList>
    </citation>
    <scope>NUCLEOTIDE SEQUENCE [LARGE SCALE MRNA] (ISOFORM 2)</scope>
    <source>
        <tissue>Testis</tissue>
    </source>
</reference>
<reference key="2">
    <citation type="submission" date="2004-06" db="EMBL/GenBank/DDBJ databases">
        <title>Cloning of human full open reading frames in Gateway(TM) system entry vector (pDONR201).</title>
        <authorList>
            <person name="Ebert L."/>
            <person name="Schick M."/>
            <person name="Neubert P."/>
            <person name="Schatten R."/>
            <person name="Henze S."/>
            <person name="Korn B."/>
        </authorList>
    </citation>
    <scope>NUCLEOTIDE SEQUENCE [LARGE SCALE MRNA] (ISOFORM 2)</scope>
</reference>
<reference key="3">
    <citation type="journal article" date="2004" name="Nat. Genet.">
        <title>Complete sequencing and characterization of 21,243 full-length human cDNAs.</title>
        <authorList>
            <person name="Ota T."/>
            <person name="Suzuki Y."/>
            <person name="Nishikawa T."/>
            <person name="Otsuki T."/>
            <person name="Sugiyama T."/>
            <person name="Irie R."/>
            <person name="Wakamatsu A."/>
            <person name="Hayashi K."/>
            <person name="Sato H."/>
            <person name="Nagai K."/>
            <person name="Kimura K."/>
            <person name="Makita H."/>
            <person name="Sekine M."/>
            <person name="Obayashi M."/>
            <person name="Nishi T."/>
            <person name="Shibahara T."/>
            <person name="Tanaka T."/>
            <person name="Ishii S."/>
            <person name="Yamamoto J."/>
            <person name="Saito K."/>
            <person name="Kawai Y."/>
            <person name="Isono Y."/>
            <person name="Nakamura Y."/>
            <person name="Nagahari K."/>
            <person name="Murakami K."/>
            <person name="Yasuda T."/>
            <person name="Iwayanagi T."/>
            <person name="Wagatsuma M."/>
            <person name="Shiratori A."/>
            <person name="Sudo H."/>
            <person name="Hosoiri T."/>
            <person name="Kaku Y."/>
            <person name="Kodaira H."/>
            <person name="Kondo H."/>
            <person name="Sugawara M."/>
            <person name="Takahashi M."/>
            <person name="Kanda K."/>
            <person name="Yokoi T."/>
            <person name="Furuya T."/>
            <person name="Kikkawa E."/>
            <person name="Omura Y."/>
            <person name="Abe K."/>
            <person name="Kamihara K."/>
            <person name="Katsuta N."/>
            <person name="Sato K."/>
            <person name="Tanikawa M."/>
            <person name="Yamazaki M."/>
            <person name="Ninomiya K."/>
            <person name="Ishibashi T."/>
            <person name="Yamashita H."/>
            <person name="Murakawa K."/>
            <person name="Fujimori K."/>
            <person name="Tanai H."/>
            <person name="Kimata M."/>
            <person name="Watanabe M."/>
            <person name="Hiraoka S."/>
            <person name="Chiba Y."/>
            <person name="Ishida S."/>
            <person name="Ono Y."/>
            <person name="Takiguchi S."/>
            <person name="Watanabe S."/>
            <person name="Yosida M."/>
            <person name="Hotuta T."/>
            <person name="Kusano J."/>
            <person name="Kanehori K."/>
            <person name="Takahashi-Fujii A."/>
            <person name="Hara H."/>
            <person name="Tanase T.-O."/>
            <person name="Nomura Y."/>
            <person name="Togiya S."/>
            <person name="Komai F."/>
            <person name="Hara R."/>
            <person name="Takeuchi K."/>
            <person name="Arita M."/>
            <person name="Imose N."/>
            <person name="Musashino K."/>
            <person name="Yuuki H."/>
            <person name="Oshima A."/>
            <person name="Sasaki N."/>
            <person name="Aotsuka S."/>
            <person name="Yoshikawa Y."/>
            <person name="Matsunawa H."/>
            <person name="Ichihara T."/>
            <person name="Shiohata N."/>
            <person name="Sano S."/>
            <person name="Moriya S."/>
            <person name="Momiyama H."/>
            <person name="Satoh N."/>
            <person name="Takami S."/>
            <person name="Terashima Y."/>
            <person name="Suzuki O."/>
            <person name="Nakagawa S."/>
            <person name="Senoh A."/>
            <person name="Mizoguchi H."/>
            <person name="Goto Y."/>
            <person name="Shimizu F."/>
            <person name="Wakebe H."/>
            <person name="Hishigaki H."/>
            <person name="Watanabe T."/>
            <person name="Sugiyama A."/>
            <person name="Takemoto M."/>
            <person name="Kawakami B."/>
            <person name="Yamazaki M."/>
            <person name="Watanabe K."/>
            <person name="Kumagai A."/>
            <person name="Itakura S."/>
            <person name="Fukuzumi Y."/>
            <person name="Fujimori Y."/>
            <person name="Komiyama M."/>
            <person name="Tashiro H."/>
            <person name="Tanigami A."/>
            <person name="Fujiwara T."/>
            <person name="Ono T."/>
            <person name="Yamada K."/>
            <person name="Fujii Y."/>
            <person name="Ozaki K."/>
            <person name="Hirao M."/>
            <person name="Ohmori Y."/>
            <person name="Kawabata A."/>
            <person name="Hikiji T."/>
            <person name="Kobatake N."/>
            <person name="Inagaki H."/>
            <person name="Ikema Y."/>
            <person name="Okamoto S."/>
            <person name="Okitani R."/>
            <person name="Kawakami T."/>
            <person name="Noguchi S."/>
            <person name="Itoh T."/>
            <person name="Shigeta K."/>
            <person name="Senba T."/>
            <person name="Matsumura K."/>
            <person name="Nakajima Y."/>
            <person name="Mizuno T."/>
            <person name="Morinaga M."/>
            <person name="Sasaki M."/>
            <person name="Togashi T."/>
            <person name="Oyama M."/>
            <person name="Hata H."/>
            <person name="Watanabe M."/>
            <person name="Komatsu T."/>
            <person name="Mizushima-Sugano J."/>
            <person name="Satoh T."/>
            <person name="Shirai Y."/>
            <person name="Takahashi Y."/>
            <person name="Nakagawa K."/>
            <person name="Okumura K."/>
            <person name="Nagase T."/>
            <person name="Nomura N."/>
            <person name="Kikuchi H."/>
            <person name="Masuho Y."/>
            <person name="Yamashita R."/>
            <person name="Nakai K."/>
            <person name="Yada T."/>
            <person name="Nakamura Y."/>
            <person name="Ohara O."/>
            <person name="Isogai T."/>
            <person name="Sugano S."/>
        </authorList>
    </citation>
    <scope>NUCLEOTIDE SEQUENCE [LARGE SCALE MRNA] (ISOFORM 1)</scope>
    <source>
        <tissue>Uterus</tissue>
    </source>
</reference>
<reference key="4">
    <citation type="journal article" date="2000" name="Nature">
        <title>The DNA sequence of human chromosome 21.</title>
        <authorList>
            <person name="Hattori M."/>
            <person name="Fujiyama A."/>
            <person name="Taylor T.D."/>
            <person name="Watanabe H."/>
            <person name="Yada T."/>
            <person name="Park H.-S."/>
            <person name="Toyoda A."/>
            <person name="Ishii K."/>
            <person name="Totoki Y."/>
            <person name="Choi D.-K."/>
            <person name="Groner Y."/>
            <person name="Soeda E."/>
            <person name="Ohki M."/>
            <person name="Takagi T."/>
            <person name="Sakaki Y."/>
            <person name="Taudien S."/>
            <person name="Blechschmidt K."/>
            <person name="Polley A."/>
            <person name="Menzel U."/>
            <person name="Delabar J."/>
            <person name="Kumpf K."/>
            <person name="Lehmann R."/>
            <person name="Patterson D."/>
            <person name="Reichwald K."/>
            <person name="Rump A."/>
            <person name="Schillhabel M."/>
            <person name="Schudy A."/>
            <person name="Zimmermann W."/>
            <person name="Rosenthal A."/>
            <person name="Kudoh J."/>
            <person name="Shibuya K."/>
            <person name="Kawasaki K."/>
            <person name="Asakawa S."/>
            <person name="Shintani A."/>
            <person name="Sasaki T."/>
            <person name="Nagamine K."/>
            <person name="Mitsuyama S."/>
            <person name="Antonarakis S.E."/>
            <person name="Minoshima S."/>
            <person name="Shimizu N."/>
            <person name="Nordsiek G."/>
            <person name="Hornischer K."/>
            <person name="Brandt P."/>
            <person name="Scharfe M."/>
            <person name="Schoen O."/>
            <person name="Desario A."/>
            <person name="Reichelt J."/>
            <person name="Kauer G."/>
            <person name="Bloecker H."/>
            <person name="Ramser J."/>
            <person name="Beck A."/>
            <person name="Klages S."/>
            <person name="Hennig S."/>
            <person name="Riesselmann L."/>
            <person name="Dagand E."/>
            <person name="Wehrmeyer S."/>
            <person name="Borzym K."/>
            <person name="Gardiner K."/>
            <person name="Nizetic D."/>
            <person name="Francis F."/>
            <person name="Lehrach H."/>
            <person name="Reinhardt R."/>
            <person name="Yaspo M.-L."/>
        </authorList>
    </citation>
    <scope>NUCLEOTIDE SEQUENCE [LARGE SCALE GENOMIC DNA]</scope>
</reference>
<reference key="5">
    <citation type="submission" date="2005-09" db="EMBL/GenBank/DDBJ databases">
        <authorList>
            <person name="Mural R.J."/>
            <person name="Istrail S."/>
            <person name="Sutton G.G."/>
            <person name="Florea L."/>
            <person name="Halpern A.L."/>
            <person name="Mobarry C.M."/>
            <person name="Lippert R."/>
            <person name="Walenz B."/>
            <person name="Shatkay H."/>
            <person name="Dew I."/>
            <person name="Miller J.R."/>
            <person name="Flanigan M.J."/>
            <person name="Edwards N.J."/>
            <person name="Bolanos R."/>
            <person name="Fasulo D."/>
            <person name="Halldorsson B.V."/>
            <person name="Hannenhalli S."/>
            <person name="Turner R."/>
            <person name="Yooseph S."/>
            <person name="Lu F."/>
            <person name="Nusskern D.R."/>
            <person name="Shue B.C."/>
            <person name="Zheng X.H."/>
            <person name="Zhong F."/>
            <person name="Delcher A.L."/>
            <person name="Huson D.H."/>
            <person name="Kravitz S.A."/>
            <person name="Mouchard L."/>
            <person name="Reinert K."/>
            <person name="Remington K.A."/>
            <person name="Clark A.G."/>
            <person name="Waterman M.S."/>
            <person name="Eichler E.E."/>
            <person name="Adams M.D."/>
            <person name="Hunkapiller M.W."/>
            <person name="Myers E.W."/>
            <person name="Venter J.C."/>
        </authorList>
    </citation>
    <scope>NUCLEOTIDE SEQUENCE [LARGE SCALE GENOMIC DNA]</scope>
</reference>
<reference key="6">
    <citation type="journal article" date="2004" name="Genome Res.">
        <title>The status, quality, and expansion of the NIH full-length cDNA project: the Mammalian Gene Collection (MGC).</title>
        <authorList>
            <consortium name="The MGC Project Team"/>
        </authorList>
    </citation>
    <scope>NUCLEOTIDE SEQUENCE [LARGE SCALE MRNA] (ISOFORM 2)</scope>
    <source>
        <tissue>Brain</tissue>
        <tissue>Eye</tissue>
        <tissue>Mammary gland</tissue>
        <tissue>Ovary</tissue>
    </source>
</reference>
<reference key="7">
    <citation type="journal article" date="2008" name="Genes Dev.">
        <title>Genomic predictors of interindividual differences in response to DNA damaging agents.</title>
        <authorList>
            <person name="Fry R.C."/>
            <person name="Svensson J.P."/>
            <person name="Valiathan C."/>
            <person name="Wang E."/>
            <person name="Hogan B.J."/>
            <person name="Bhattacharya S."/>
            <person name="Bugni J.M."/>
            <person name="Whittaker C.A."/>
            <person name="Samson L.D."/>
        </authorList>
    </citation>
    <scope>ASSOCIATION WITH SENSITIVITY TO ALKYLATING AGENTS</scope>
</reference>
<reference key="8">
    <citation type="journal article" date="2019" name="J. Proteome Res.">
        <title>Cell Type-Specific Expression of Testis Elevated Genes Based on Transcriptomics and Antibody-Based Proteomics.</title>
        <authorList>
            <person name="Pineau C."/>
            <person name="Hikmet F."/>
            <person name="Zhang C."/>
            <person name="Oksvold P."/>
            <person name="Chen S."/>
            <person name="Fagerberg L."/>
            <person name="Uhlen M."/>
            <person name="Lindskog C."/>
        </authorList>
    </citation>
    <scope>SUBCELLULAR LOCATION</scope>
</reference>
<name>SPC1L_HUMAN</name>
<proteinExistence type="evidence at protein level"/>
<accession>Q9H0A9</accession>
<accession>B4E323</accession>
<accession>Q52LS9</accession>
<accession>Q6FIH5</accession>
<accession>Q6P0L3</accession>
<accession>Q9NSE5</accession>
<comment type="interaction">
    <interactant intactId="EBI-372911">
        <id>Q9H0A9</id>
    </interactant>
    <interactant intactId="EBI-2875746">
        <id>P40617</id>
        <label>ARL4A</label>
    </interactant>
    <organismsDiffer>false</organismsDiffer>
    <experiments>3</experiments>
</comment>
<comment type="interaction">
    <interactant intactId="EBI-372911">
        <id>Q9H0A9</id>
    </interactant>
    <interactant intactId="EBI-742909">
        <id>Q9H6L4</id>
        <label>ARMC7</label>
    </interactant>
    <organismsDiffer>false</organismsDiffer>
    <experiments>3</experiments>
</comment>
<comment type="interaction">
    <interactant intactId="EBI-372911">
        <id>Q9H0A9</id>
    </interactant>
    <interactant intactId="EBI-5661036">
        <id>A1L4K1</id>
        <label>FSD2</label>
    </interactant>
    <organismsDiffer>false</organismsDiffer>
    <experiments>4</experiments>
</comment>
<comment type="interaction">
    <interactant intactId="EBI-372911">
        <id>Q9H0A9</id>
    </interactant>
    <interactant intactId="EBI-745305">
        <id>Q13422</id>
        <label>IKZF1</label>
    </interactant>
    <organismsDiffer>false</organismsDiffer>
    <experiments>3</experiments>
</comment>
<comment type="interaction">
    <interactant intactId="EBI-372911">
        <id>Q9H0A9</id>
    </interactant>
    <interactant intactId="EBI-741037">
        <id>Q9BRK4</id>
        <label>LZTS2</label>
    </interactant>
    <organismsDiffer>false</organismsDiffer>
    <experiments>3</experiments>
</comment>
<comment type="interaction">
    <interactant intactId="EBI-372911">
        <id>Q9H0A9</id>
    </interactant>
    <interactant intactId="EBI-10304199">
        <id>Q8IXK0-4</id>
        <label>PHC2</label>
    </interactant>
    <organismsDiffer>false</organismsDiffer>
    <experiments>3</experiments>
</comment>
<comment type="interaction">
    <interactant intactId="EBI-372911">
        <id>Q9H0A9</id>
    </interactant>
    <interactant intactId="EBI-302345">
        <id>Q8ND90</id>
        <label>PNMA1</label>
    </interactant>
    <organismsDiffer>false</organismsDiffer>
    <experiments>3</experiments>
</comment>
<comment type="interaction">
    <interactant intactId="EBI-372911">
        <id>Q9H0A9</id>
    </interactant>
    <interactant intactId="EBI-747107">
        <id>Q8IUQ4</id>
        <label>SIAH1</label>
    </interactant>
    <organismsDiffer>false</organismsDiffer>
    <experiments>3</experiments>
</comment>
<comment type="interaction">
    <interactant intactId="EBI-372911">
        <id>Q9H0A9</id>
    </interactant>
    <interactant intactId="EBI-533224">
        <id>P15884</id>
        <label>TCF4</label>
    </interactant>
    <organismsDiffer>false</organismsDiffer>
    <experiments>3</experiments>
</comment>
<comment type="interaction">
    <interactant intactId="EBI-372911">
        <id>Q9H0A9</id>
    </interactant>
    <interactant intactId="EBI-719493">
        <id>P14373</id>
        <label>TRIM27</label>
    </interactant>
    <organismsDiffer>false</organismsDiffer>
    <experiments>3</experiments>
</comment>
<comment type="interaction">
    <interactant intactId="EBI-11995806">
        <id>Q9H0A9-2</id>
    </interactant>
    <interactant intactId="EBI-12007918">
        <id>O00154-4</id>
        <label>ACOT7</label>
    </interactant>
    <organismsDiffer>false</organismsDiffer>
    <experiments>3</experiments>
</comment>
<comment type="interaction">
    <interactant intactId="EBI-11995806">
        <id>Q9H0A9-2</id>
    </interactant>
    <interactant intactId="EBI-742909">
        <id>Q9H6L4</id>
        <label>ARMC7</label>
    </interactant>
    <organismsDiffer>false</organismsDiffer>
    <experiments>3</experiments>
</comment>
<comment type="interaction">
    <interactant intactId="EBI-11995806">
        <id>Q9H0A9-2</id>
    </interactant>
    <interactant intactId="EBI-1166928">
        <id>Q8N5M1</id>
        <label>ATPAF2</label>
    </interactant>
    <organismsDiffer>false</organismsDiffer>
    <experiments>3</experiments>
</comment>
<comment type="interaction">
    <interactant intactId="EBI-11995806">
        <id>Q9H0A9-2</id>
    </interactant>
    <interactant intactId="EBI-12011224">
        <id>Q9NPB3</id>
        <label>CABP2</label>
    </interactant>
    <organismsDiffer>false</organismsDiffer>
    <experiments>3</experiments>
</comment>
<comment type="interaction">
    <interactant intactId="EBI-11995806">
        <id>Q9H0A9-2</id>
    </interactant>
    <interactant intactId="EBI-11988027">
        <id>Q9NRI5-2</id>
        <label>DISC1</label>
    </interactant>
    <organismsDiffer>false</organismsDiffer>
    <experiments>3</experiments>
</comment>
<comment type="interaction">
    <interactant intactId="EBI-11995806">
        <id>Q9H0A9-2</id>
    </interactant>
    <interactant intactId="EBI-371922">
        <id>Q96B26</id>
        <label>EXOSC8</label>
    </interactant>
    <organismsDiffer>false</organismsDiffer>
    <experiments>3</experiments>
</comment>
<comment type="interaction">
    <interactant intactId="EBI-11995806">
        <id>Q9H0A9-2</id>
    </interactant>
    <interactant intactId="EBI-11319000">
        <id>O15353</id>
        <label>FOXN1</label>
    </interactant>
    <organismsDiffer>false</organismsDiffer>
    <experiments>3</experiments>
</comment>
<comment type="interaction">
    <interactant intactId="EBI-11995806">
        <id>Q9H0A9-2</id>
    </interactant>
    <interactant intactId="EBI-5661036">
        <id>A1L4K1</id>
        <label>FSD2</label>
    </interactant>
    <organismsDiffer>false</organismsDiffer>
    <experiments>3</experiments>
</comment>
<comment type="interaction">
    <interactant intactId="EBI-11995806">
        <id>Q9H0A9-2</id>
    </interactant>
    <interactant intactId="EBI-11163335">
        <id>Q9NYA3</id>
        <label>GOLGA6A</label>
    </interactant>
    <organismsDiffer>false</organismsDiffer>
    <experiments>5</experiments>
</comment>
<comment type="interaction">
    <interactant intactId="EBI-11995806">
        <id>Q9H0A9-2</id>
    </interactant>
    <interactant intactId="EBI-6268616">
        <id>Q969F1</id>
        <label>GTF3C6</label>
    </interactant>
    <organismsDiffer>false</organismsDiffer>
    <experiments>3</experiments>
</comment>
<comment type="interaction">
    <interactant intactId="EBI-11995806">
        <id>Q9H0A9-2</id>
    </interactant>
    <interactant intactId="EBI-10961706">
        <id>Q96ED9-2</id>
        <label>HOOK2</label>
    </interactant>
    <organismsDiffer>false</organismsDiffer>
    <experiments>3</experiments>
</comment>
<comment type="interaction">
    <interactant intactId="EBI-11995806">
        <id>Q9H0A9-2</id>
    </interactant>
    <interactant intactId="EBI-14069005">
        <id>Q9BVG8-5</id>
        <label>KIFC3</label>
    </interactant>
    <organismsDiffer>false</organismsDiffer>
    <experiments>3</experiments>
</comment>
<comment type="interaction">
    <interactant intactId="EBI-11995806">
        <id>Q9H0A9-2</id>
    </interactant>
    <interactant intactId="EBI-10171697">
        <id>Q6A162</id>
        <label>KRT40</label>
    </interactant>
    <organismsDiffer>false</organismsDiffer>
    <experiments>3</experiments>
</comment>
<comment type="interaction">
    <interactant intactId="EBI-11995806">
        <id>Q9H0A9-2</id>
    </interactant>
    <interactant intactId="EBI-2555085">
        <id>Q8IVT2</id>
        <label>MISP</label>
    </interactant>
    <organismsDiffer>false</organismsDiffer>
    <experiments>3</experiments>
</comment>
<comment type="interaction">
    <interactant intactId="EBI-11995806">
        <id>Q9H0A9-2</id>
    </interactant>
    <interactant intactId="EBI-11522433">
        <id>Q5JR59-3</id>
        <label>MTUS2</label>
    </interactant>
    <organismsDiffer>false</organismsDiffer>
    <experiments>3</experiments>
</comment>
<comment type="interaction">
    <interactant intactId="EBI-11995806">
        <id>Q9H0A9-2</id>
    </interactant>
    <interactant intactId="EBI-7950783">
        <id>Q96JP2</id>
        <label>MYO15B</label>
    </interactant>
    <organismsDiffer>false</organismsDiffer>
    <experiments>3</experiments>
</comment>
<comment type="interaction">
    <interactant intactId="EBI-11995806">
        <id>Q9H0A9-2</id>
    </interactant>
    <interactant intactId="EBI-713635">
        <id>O43639</id>
        <label>NCK2</label>
    </interactant>
    <organismsDiffer>false</organismsDiffer>
    <experiments>5</experiments>
</comment>
<comment type="interaction">
    <interactant intactId="EBI-11995806">
        <id>Q9H0A9-2</id>
    </interactant>
    <interactant intactId="EBI-591778">
        <id>P61970</id>
        <label>NUTF2</label>
    </interactant>
    <organismsDiffer>false</organismsDiffer>
    <experiments>3</experiments>
</comment>
<comment type="interaction">
    <interactant intactId="EBI-11995806">
        <id>Q9H0A9-2</id>
    </interactant>
    <interactant intactId="EBI-398874">
        <id>Q9UBU9</id>
        <label>NXF1</label>
    </interactant>
    <organismsDiffer>false</organismsDiffer>
    <experiments>3</experiments>
</comment>
<comment type="interaction">
    <interactant intactId="EBI-11995806">
        <id>Q9H0A9-2</id>
    </interactant>
    <interactant intactId="EBI-2861403">
        <id>Q9UIL8</id>
        <label>PHF11</label>
    </interactant>
    <organismsDiffer>false</organismsDiffer>
    <experiments>3</experiments>
</comment>
<comment type="interaction">
    <interactant intactId="EBI-11995806">
        <id>Q9H0A9-2</id>
    </interactant>
    <interactant intactId="EBI-348567">
        <id>O75928-2</id>
        <label>PIAS2</label>
    </interactant>
    <organismsDiffer>false</organismsDiffer>
    <experiments>3</experiments>
</comment>
<comment type="interaction">
    <interactant intactId="EBI-11995806">
        <id>Q9H0A9-2</id>
    </interactant>
    <interactant intactId="EBI-79165">
        <id>Q9NRD5</id>
        <label>PICK1</label>
    </interactant>
    <organismsDiffer>false</organismsDiffer>
    <experiments>3</experiments>
</comment>
<comment type="interaction">
    <interactant intactId="EBI-11995806">
        <id>Q9H0A9-2</id>
    </interactant>
    <interactant intactId="EBI-302345">
        <id>Q8ND90</id>
        <label>PNMA1</label>
    </interactant>
    <organismsDiffer>false</organismsDiffer>
    <experiments>3</experiments>
</comment>
<comment type="interaction">
    <interactant intactId="EBI-11995806">
        <id>Q9H0A9-2</id>
    </interactant>
    <interactant intactId="EBI-1055079">
        <id>O15160</id>
        <label>POLR1C</label>
    </interactant>
    <organismsDiffer>false</organismsDiffer>
    <experiments>3</experiments>
</comment>
<comment type="interaction">
    <interactant intactId="EBI-11995806">
        <id>Q9H0A9-2</id>
    </interactant>
    <interactant intactId="EBI-352350">
        <id>P62140</id>
        <label>PPP1CB</label>
    </interactant>
    <organismsDiffer>false</organismsDiffer>
    <experiments>3</experiments>
</comment>
<comment type="interaction">
    <interactant intactId="EBI-11995806">
        <id>Q9H0A9-2</id>
    </interactant>
    <interactant intactId="EBI-347462">
        <id>P47897</id>
        <label>QARS1</label>
    </interactant>
    <organismsDiffer>false</organismsDiffer>
    <experiments>3</experiments>
</comment>
<comment type="interaction">
    <interactant intactId="EBI-11995806">
        <id>Q9H0A9-2</id>
    </interactant>
    <interactant intactId="EBI-1055693">
        <id>O75771</id>
        <label>RAD51D</label>
    </interactant>
    <organismsDiffer>false</organismsDiffer>
    <experiments>3</experiments>
</comment>
<comment type="interaction">
    <interactant intactId="EBI-11995806">
        <id>Q9H0A9-2</id>
    </interactant>
    <interactant intactId="EBI-8642021">
        <id>Q15415</id>
        <label>RBMY1J</label>
    </interactant>
    <organismsDiffer>false</organismsDiffer>
    <experiments>3</experiments>
</comment>
<comment type="interaction">
    <interactant intactId="EBI-11995806">
        <id>Q9H0A9-2</id>
    </interactant>
    <interactant intactId="EBI-10829018">
        <id>Q04864-2</id>
        <label>REL</label>
    </interactant>
    <organismsDiffer>false</organismsDiffer>
    <experiments>3</experiments>
</comment>
<comment type="interaction">
    <interactant intactId="EBI-11995806">
        <id>Q9H0A9-2</id>
    </interactant>
    <interactant intactId="EBI-11995806">
        <id>Q9H0A9-2</id>
        <label>SPATC1L</label>
    </interactant>
    <organismsDiffer>false</organismsDiffer>
    <experiments>5</experiments>
</comment>
<comment type="interaction">
    <interactant intactId="EBI-11995806">
        <id>Q9H0A9-2</id>
    </interactant>
    <interactant intactId="EBI-6872807">
        <id>Q8N0S2</id>
        <label>SYCE1</label>
    </interactant>
    <organismsDiffer>false</organismsDiffer>
    <experiments>3</experiments>
</comment>
<comment type="interaction">
    <interactant intactId="EBI-11995806">
        <id>Q9H0A9-2</id>
    </interactant>
    <interactant intactId="EBI-750487">
        <id>Q8WW24</id>
        <label>TEKT4</label>
    </interactant>
    <organismsDiffer>false</organismsDiffer>
    <experiments>3</experiments>
</comment>
<comment type="interaction">
    <interactant intactId="EBI-11995806">
        <id>Q9H0A9-2</id>
    </interactant>
    <interactant intactId="EBI-719493">
        <id>P14373</id>
        <label>TRIM27</label>
    </interactant>
    <organismsDiffer>false</organismsDiffer>
    <experiments>3</experiments>
</comment>
<comment type="interaction">
    <interactant intactId="EBI-11995806">
        <id>Q9H0A9-2</id>
    </interactant>
    <interactant intactId="EBI-2652818">
        <id>Q9BU70</id>
        <label>TRMO</label>
    </interactant>
    <organismsDiffer>false</organismsDiffer>
    <experiments>5</experiments>
</comment>
<comment type="interaction">
    <interactant intactId="EBI-11995806">
        <id>Q9H0A9-2</id>
    </interactant>
    <interactant intactId="EBI-746981">
        <id>Q969E8</id>
        <label>TSR2</label>
    </interactant>
    <organismsDiffer>false</organismsDiffer>
    <experiments>3</experiments>
</comment>
<comment type="interaction">
    <interactant intactId="EBI-11995806">
        <id>Q9H0A9-2</id>
    </interactant>
    <interactant intactId="EBI-607755">
        <id>Q9BZL1</id>
        <label>UBL5</label>
    </interactant>
    <organismsDiffer>false</organismsDiffer>
    <experiments>3</experiments>
</comment>
<comment type="interaction">
    <interactant intactId="EBI-11995806">
        <id>Q9H0A9-2</id>
    </interactant>
    <interactant intactId="EBI-17494306">
        <id>Q8NAP8</id>
        <label>ZBTB8B</label>
    </interactant>
    <organismsDiffer>false</organismsDiffer>
    <experiments>3</experiments>
</comment>
<comment type="subcellular location">
    <subcellularLocation>
        <location evidence="3">Cytoplasm</location>
    </subcellularLocation>
</comment>
<comment type="alternative products">
    <event type="alternative splicing"/>
    <isoform>
        <id>Q9H0A9-1</id>
        <name>1</name>
        <sequence type="displayed"/>
    </isoform>
    <isoform>
        <id>Q9H0A9-2</id>
        <name>2</name>
        <sequence type="described" ref="VSP_039151"/>
    </isoform>
</comment>
<comment type="miscellaneous">
    <text>Highly variable expression among individuals is associated with differential sensitivity to the DNA alkylating agent N-methyl-N'-nitro-N-nitrosoguanidine (MNNG), decreased expression being associated with increased sensitivity.</text>
</comment>
<comment type="similarity">
    <text evidence="7">Belongs to the speriolin family.</text>
</comment>
<comment type="sequence caution" evidence="7">
    <conflict type="erroneous gene model prediction">
        <sequence resource="EMBL-CDS" id="BAA95497"/>
    </conflict>
</comment>
<protein>
    <recommendedName>
        <fullName>Speriolin-like protein</fullName>
    </recommendedName>
    <alternativeName>
        <fullName>Spermatogenesis and centriole-associated protein 1-like protein</fullName>
    </alternativeName>
</protein>
<evidence type="ECO:0000250" key="1">
    <source>
        <dbReference type="UniProtKB" id="Q9D9W0"/>
    </source>
</evidence>
<evidence type="ECO:0000256" key="2">
    <source>
        <dbReference type="SAM" id="MobiDB-lite"/>
    </source>
</evidence>
<evidence type="ECO:0000269" key="3">
    <source>
    </source>
</evidence>
<evidence type="ECO:0000303" key="4">
    <source>
    </source>
</evidence>
<evidence type="ECO:0000303" key="5">
    <source>
    </source>
</evidence>
<evidence type="ECO:0000303" key="6">
    <source ref="2"/>
</evidence>
<evidence type="ECO:0000305" key="7"/>
<feature type="chain" id="PRO_0000079519" description="Speriolin-like protein">
    <location>
        <begin position="1"/>
        <end position="340"/>
    </location>
</feature>
<feature type="region of interest" description="Disordered" evidence="2">
    <location>
        <begin position="42"/>
        <end position="73"/>
    </location>
</feature>
<feature type="region of interest" description="Disordered" evidence="2">
    <location>
        <begin position="94"/>
        <end position="135"/>
    </location>
</feature>
<feature type="compositionally biased region" description="Basic and acidic residues" evidence="2">
    <location>
        <begin position="123"/>
        <end position="133"/>
    </location>
</feature>
<feature type="modified residue" description="Phosphoserine" evidence="1">
    <location>
        <position position="60"/>
    </location>
</feature>
<feature type="modified residue" description="Phosphoserine" evidence="1">
    <location>
        <position position="134"/>
    </location>
</feature>
<feature type="splice variant" id="VSP_039151" description="In isoform 2." evidence="4 5 6">
    <location>
        <begin position="1"/>
        <end position="154"/>
    </location>
</feature>
<feature type="sequence variant" id="VAR_059639" description="In dbSNP:rs884134.">
    <original>P</original>
    <variation>L</variation>
    <location>
        <position position="113"/>
    </location>
</feature>
<feature type="sequence variant" id="VAR_059640" description="In dbSNP:rs14378.">
    <original>S</original>
    <variation>N</variation>
    <location>
        <position position="298"/>
    </location>
</feature>
<dbReference type="EMBL" id="AL136871">
    <property type="protein sequence ID" value="CAB66805.1"/>
    <property type="molecule type" value="mRNA"/>
</dbReference>
<dbReference type="EMBL" id="CR533451">
    <property type="protein sequence ID" value="CAG38482.1"/>
    <property type="molecule type" value="mRNA"/>
</dbReference>
<dbReference type="EMBL" id="AK304535">
    <property type="protein sequence ID" value="BAG65335.1"/>
    <property type="molecule type" value="mRNA"/>
</dbReference>
<dbReference type="EMBL" id="AP001468">
    <property type="status" value="NOT_ANNOTATED_CDS"/>
    <property type="molecule type" value="Genomic_DNA"/>
</dbReference>
<dbReference type="EMBL" id="AP001759">
    <property type="protein sequence ID" value="BAA95497.1"/>
    <property type="status" value="ALT_SEQ"/>
    <property type="molecule type" value="Genomic_DNA"/>
</dbReference>
<dbReference type="EMBL" id="CH471079">
    <property type="protein sequence ID" value="EAX09307.1"/>
    <property type="molecule type" value="Genomic_DNA"/>
</dbReference>
<dbReference type="EMBL" id="BC009497">
    <property type="protein sequence ID" value="AAH09497.3"/>
    <property type="molecule type" value="mRNA"/>
</dbReference>
<dbReference type="EMBL" id="BC065570">
    <property type="protein sequence ID" value="AAH65570.2"/>
    <property type="molecule type" value="mRNA"/>
</dbReference>
<dbReference type="EMBL" id="BC084577">
    <property type="protein sequence ID" value="AAH84577.1"/>
    <property type="molecule type" value="mRNA"/>
</dbReference>
<dbReference type="EMBL" id="BC093804">
    <property type="protein sequence ID" value="AAH93804.2"/>
    <property type="molecule type" value="mRNA"/>
</dbReference>
<dbReference type="EMBL" id="BC112293">
    <property type="protein sequence ID" value="AAI12294.2"/>
    <property type="molecule type" value="mRNA"/>
</dbReference>
<dbReference type="CCDS" id="CCDS13732.1">
    <molecule id="Q9H0A9-2"/>
</dbReference>
<dbReference type="CCDS" id="CCDS46653.1">
    <molecule id="Q9H0A9-1"/>
</dbReference>
<dbReference type="RefSeq" id="NP_001136326.1">
    <molecule id="Q9H0A9-1"/>
    <property type="nucleotide sequence ID" value="NM_001142854.2"/>
</dbReference>
<dbReference type="RefSeq" id="NP_115637.3">
    <molecule id="Q9H0A9-2"/>
    <property type="nucleotide sequence ID" value="NM_032261.4"/>
</dbReference>
<dbReference type="RefSeq" id="XP_005261245.1">
    <molecule id="Q9H0A9-1"/>
    <property type="nucleotide sequence ID" value="XM_005261188.6"/>
</dbReference>
<dbReference type="RefSeq" id="XP_016883969.1">
    <property type="nucleotide sequence ID" value="XM_017028480.1"/>
</dbReference>
<dbReference type="RefSeq" id="XP_054185417.1">
    <molecule id="Q9H0A9-1"/>
    <property type="nucleotide sequence ID" value="XM_054329442.1"/>
</dbReference>
<dbReference type="SMR" id="Q9H0A9"/>
<dbReference type="BioGRID" id="123955">
    <property type="interactions" value="58"/>
</dbReference>
<dbReference type="FunCoup" id="Q9H0A9">
    <property type="interactions" value="11"/>
</dbReference>
<dbReference type="IntAct" id="Q9H0A9">
    <property type="interactions" value="49"/>
</dbReference>
<dbReference type="STRING" id="9606.ENSP00000291672"/>
<dbReference type="iPTMnet" id="Q9H0A9"/>
<dbReference type="PhosphoSitePlus" id="Q9H0A9"/>
<dbReference type="BioMuta" id="SPATC1L"/>
<dbReference type="DMDM" id="296439382"/>
<dbReference type="jPOST" id="Q9H0A9"/>
<dbReference type="MassIVE" id="Q9H0A9"/>
<dbReference type="PaxDb" id="9606-ENSP00000291672"/>
<dbReference type="PeptideAtlas" id="Q9H0A9"/>
<dbReference type="ProteomicsDB" id="80238">
    <molecule id="Q9H0A9-1"/>
</dbReference>
<dbReference type="ProteomicsDB" id="80239">
    <molecule id="Q9H0A9-2"/>
</dbReference>
<dbReference type="Pumba" id="Q9H0A9"/>
<dbReference type="Antibodypedia" id="10604">
    <property type="antibodies" value="214 antibodies from 20 providers"/>
</dbReference>
<dbReference type="DNASU" id="84221"/>
<dbReference type="Ensembl" id="ENST00000291672.6">
    <molecule id="Q9H0A9-1"/>
    <property type="protein sequence ID" value="ENSP00000291672.5"/>
    <property type="gene ID" value="ENSG00000160284.15"/>
</dbReference>
<dbReference type="Ensembl" id="ENST00000330205.10">
    <molecule id="Q9H0A9-2"/>
    <property type="protein sequence ID" value="ENSP00000333869.6"/>
    <property type="gene ID" value="ENSG00000160284.15"/>
</dbReference>
<dbReference type="Ensembl" id="ENST00000618495.3">
    <molecule id="Q9H0A9-2"/>
    <property type="protein sequence ID" value="ENSP00000478124.1"/>
    <property type="gene ID" value="ENSG00000274679.4"/>
</dbReference>
<dbReference type="Ensembl" id="ENST00000621926.3">
    <molecule id="Q9H0A9-1"/>
    <property type="protein sequence ID" value="ENSP00000483544.1"/>
    <property type="gene ID" value="ENSG00000274679.4"/>
</dbReference>
<dbReference type="GeneID" id="84221"/>
<dbReference type="KEGG" id="hsa:84221"/>
<dbReference type="MANE-Select" id="ENST00000291672.6">
    <property type="protein sequence ID" value="ENSP00000291672.5"/>
    <property type="RefSeq nucleotide sequence ID" value="NM_001142854.2"/>
    <property type="RefSeq protein sequence ID" value="NP_001136326.1"/>
</dbReference>
<dbReference type="UCSC" id="uc002zii.4">
    <molecule id="Q9H0A9-1"/>
    <property type="organism name" value="human"/>
</dbReference>
<dbReference type="AGR" id="HGNC:1298"/>
<dbReference type="CTD" id="84221"/>
<dbReference type="DisGeNET" id="84221"/>
<dbReference type="GeneCards" id="SPATC1L"/>
<dbReference type="HGNC" id="HGNC:1298">
    <property type="gene designation" value="SPATC1L"/>
</dbReference>
<dbReference type="HPA" id="ENSG00000160284">
    <property type="expression patterns" value="Tissue enhanced (testis)"/>
</dbReference>
<dbReference type="MIM" id="612412">
    <property type="type" value="gene"/>
</dbReference>
<dbReference type="neXtProt" id="NX_Q9H0A9"/>
<dbReference type="OpenTargets" id="ENSG00000160284"/>
<dbReference type="PharmGKB" id="PA25851"/>
<dbReference type="VEuPathDB" id="HostDB:ENSG00000160284"/>
<dbReference type="eggNOG" id="ENOG502RRP2">
    <property type="taxonomic scope" value="Eukaryota"/>
</dbReference>
<dbReference type="GeneTree" id="ENSGT00520000055666"/>
<dbReference type="HOGENOM" id="CLU_107196_0_0_1"/>
<dbReference type="InParanoid" id="Q9H0A9"/>
<dbReference type="OMA" id="PAYPEAC"/>
<dbReference type="OrthoDB" id="6114770at2759"/>
<dbReference type="PAN-GO" id="Q9H0A9">
    <property type="GO annotations" value="1 GO annotation based on evolutionary models"/>
</dbReference>
<dbReference type="PhylomeDB" id="Q9H0A9"/>
<dbReference type="TreeFam" id="TF329273"/>
<dbReference type="PathwayCommons" id="Q9H0A9"/>
<dbReference type="SignaLink" id="Q9H0A9"/>
<dbReference type="BioGRID-ORCS" id="84221">
    <property type="hits" value="16 hits in 1154 CRISPR screens"/>
</dbReference>
<dbReference type="ChiTaRS" id="SPATC1L">
    <property type="organism name" value="human"/>
</dbReference>
<dbReference type="GeneWiki" id="C21orf56"/>
<dbReference type="GenomeRNAi" id="84221"/>
<dbReference type="Pharos" id="Q9H0A9">
    <property type="development level" value="Tbio"/>
</dbReference>
<dbReference type="PRO" id="PR:Q9H0A9"/>
<dbReference type="Proteomes" id="UP000005640">
    <property type="component" value="Chromosome 21"/>
</dbReference>
<dbReference type="RNAct" id="Q9H0A9">
    <property type="molecule type" value="protein"/>
</dbReference>
<dbReference type="Bgee" id="ENSG00000160284">
    <property type="expression patterns" value="Expressed in right testis and 93 other cell types or tissues"/>
</dbReference>
<dbReference type="GO" id="GO:0005813">
    <property type="term" value="C:centrosome"/>
    <property type="evidence" value="ECO:0000318"/>
    <property type="project" value="GO_Central"/>
</dbReference>
<dbReference type="GO" id="GO:0005737">
    <property type="term" value="C:cytoplasm"/>
    <property type="evidence" value="ECO:0000314"/>
    <property type="project" value="UniProtKB"/>
</dbReference>
<dbReference type="GO" id="GO:0120212">
    <property type="term" value="C:sperm head-tail coupling apparatus"/>
    <property type="evidence" value="ECO:0000318"/>
    <property type="project" value="GO_Central"/>
</dbReference>
<dbReference type="GO" id="GO:0042802">
    <property type="term" value="F:identical protein binding"/>
    <property type="evidence" value="ECO:0000353"/>
    <property type="project" value="IntAct"/>
</dbReference>
<dbReference type="GO" id="GO:0034237">
    <property type="term" value="F:protein kinase A regulatory subunit binding"/>
    <property type="evidence" value="ECO:0000318"/>
    <property type="project" value="GO_Central"/>
</dbReference>
<dbReference type="GO" id="GO:0008154">
    <property type="term" value="P:actin polymerization or depolymerization"/>
    <property type="evidence" value="ECO:0007669"/>
    <property type="project" value="Ensembl"/>
</dbReference>
<dbReference type="GO" id="GO:0141163">
    <property type="term" value="P:positive regulation of cAMP/PKA signal transduction"/>
    <property type="evidence" value="ECO:0007669"/>
    <property type="project" value="Ensembl"/>
</dbReference>
<dbReference type="GO" id="GO:0007283">
    <property type="term" value="P:spermatogenesis"/>
    <property type="evidence" value="ECO:0000318"/>
    <property type="project" value="GO_Central"/>
</dbReference>
<dbReference type="InterPro" id="IPR026715">
    <property type="entry name" value="SPATC1"/>
</dbReference>
<dbReference type="InterPro" id="IPR029384">
    <property type="entry name" value="Speriolin_C"/>
</dbReference>
<dbReference type="InterPro" id="IPR029385">
    <property type="entry name" value="Speriolin_N"/>
</dbReference>
<dbReference type="PANTHER" id="PTHR22192">
    <property type="entry name" value="SPERIOLIN"/>
    <property type="match status" value="1"/>
</dbReference>
<dbReference type="PANTHER" id="PTHR22192:SF1">
    <property type="entry name" value="SPERIOLIN-LIKE PROTEIN"/>
    <property type="match status" value="1"/>
</dbReference>
<dbReference type="Pfam" id="PF15059">
    <property type="entry name" value="Speriolin_C"/>
    <property type="match status" value="1"/>
</dbReference>
<dbReference type="Pfam" id="PF15058">
    <property type="entry name" value="Speriolin_N"/>
    <property type="match status" value="1"/>
</dbReference>
<gene>
    <name type="primary">SPATC1L</name>
    <name type="synonym">C21orf56</name>
</gene>
<sequence>MAEGGELMSRLLSENADLKKQVRLLKENQMLRRLLSQSCQEGGGHDLLPPRAHAYPEAGSPGSGVPDFGRFTSVADTPSQLQTSSLEDLLCSHAPLSSEDDTSPGCAAPSQAPFKAFLSPPEPHSHRGTDRKLSPLLSPLQDSLVDKTLLEPREMVRPKKVCFSESSLPTGDRTRRSYYLNEIQSFAGAEKDARVVGEIAFQLDRRILAYVFPGVTRLYGFTVANIPEKIEQTSTKSLDGSVDERKLRELTQRYLALSARLEKLGYSRDVHPAFSEFLINTYGILKQRPDLRANPLHSSPAALRKLVIDVVPPKFLGDSLLLLNCLCELSKEDGKPLFAW</sequence>
<organism>
    <name type="scientific">Homo sapiens</name>
    <name type="common">Human</name>
    <dbReference type="NCBI Taxonomy" id="9606"/>
    <lineage>
        <taxon>Eukaryota</taxon>
        <taxon>Metazoa</taxon>
        <taxon>Chordata</taxon>
        <taxon>Craniata</taxon>
        <taxon>Vertebrata</taxon>
        <taxon>Euteleostomi</taxon>
        <taxon>Mammalia</taxon>
        <taxon>Eutheria</taxon>
        <taxon>Euarchontoglires</taxon>
        <taxon>Primates</taxon>
        <taxon>Haplorrhini</taxon>
        <taxon>Catarrhini</taxon>
        <taxon>Hominidae</taxon>
        <taxon>Homo</taxon>
    </lineage>
</organism>